<protein>
    <recommendedName>
        <fullName evidence="1">Ribonuclease P protein component</fullName>
        <shortName evidence="1">RNase P protein</shortName>
        <shortName evidence="1">RNaseP protein</shortName>
        <ecNumber evidence="1">3.1.26.5</ecNumber>
    </recommendedName>
    <alternativeName>
        <fullName evidence="1">Protein C5</fullName>
    </alternativeName>
</protein>
<keyword id="KW-0255">Endonuclease</keyword>
<keyword id="KW-0378">Hydrolase</keyword>
<keyword id="KW-0540">Nuclease</keyword>
<keyword id="KW-1185">Reference proteome</keyword>
<keyword id="KW-0694">RNA-binding</keyword>
<keyword id="KW-0819">tRNA processing</keyword>
<proteinExistence type="inferred from homology"/>
<organism>
    <name type="scientific">Vibrio cholerae serotype O1 (strain ATCC 39315 / El Tor Inaba N16961)</name>
    <dbReference type="NCBI Taxonomy" id="243277"/>
    <lineage>
        <taxon>Bacteria</taxon>
        <taxon>Pseudomonadati</taxon>
        <taxon>Pseudomonadota</taxon>
        <taxon>Gammaproteobacteria</taxon>
        <taxon>Vibrionales</taxon>
        <taxon>Vibrionaceae</taxon>
        <taxon>Vibrio</taxon>
    </lineage>
</organism>
<accession>Q9KVY2</accession>
<name>RNPA_VIBCH</name>
<comment type="function">
    <text evidence="1">RNaseP catalyzes the removal of the 5'-leader sequence from pre-tRNA to produce the mature 5'-terminus. It can also cleave other RNA substrates such as 4.5S RNA. The protein component plays an auxiliary but essential role in vivo by binding to the 5'-leader sequence and broadening the substrate specificity of the ribozyme.</text>
</comment>
<comment type="catalytic activity">
    <reaction evidence="1">
        <text>Endonucleolytic cleavage of RNA, removing 5'-extranucleotides from tRNA precursor.</text>
        <dbReference type="EC" id="3.1.26.5"/>
    </reaction>
</comment>
<comment type="subunit">
    <text evidence="1">Consists of a catalytic RNA component (M1 or rnpB) and a protein subunit.</text>
</comment>
<comment type="similarity">
    <text evidence="1">Belongs to the RnpA family.</text>
</comment>
<dbReference type="EC" id="3.1.26.5" evidence="1"/>
<dbReference type="EMBL" id="AE003852">
    <property type="protein sequence ID" value="AAF93184.1"/>
    <property type="molecule type" value="Genomic_DNA"/>
</dbReference>
<dbReference type="PIR" id="G82375">
    <property type="entry name" value="G82375"/>
</dbReference>
<dbReference type="RefSeq" id="NP_062590.1">
    <property type="nucleotide sequence ID" value="NC_002505.1"/>
</dbReference>
<dbReference type="SMR" id="Q9KVY2"/>
<dbReference type="STRING" id="243277.VC_0006"/>
<dbReference type="DNASU" id="2612959"/>
<dbReference type="EnsemblBacteria" id="AAF93184">
    <property type="protein sequence ID" value="AAF93184"/>
    <property type="gene ID" value="VC_0006"/>
</dbReference>
<dbReference type="KEGG" id="vch:VC_0006"/>
<dbReference type="PATRIC" id="fig|243277.26.peg.5"/>
<dbReference type="eggNOG" id="COG0594">
    <property type="taxonomic scope" value="Bacteria"/>
</dbReference>
<dbReference type="HOGENOM" id="CLU_117179_11_0_6"/>
<dbReference type="Proteomes" id="UP000000584">
    <property type="component" value="Chromosome 1"/>
</dbReference>
<dbReference type="GO" id="GO:0030677">
    <property type="term" value="C:ribonuclease P complex"/>
    <property type="evidence" value="ECO:0000318"/>
    <property type="project" value="GO_Central"/>
</dbReference>
<dbReference type="GO" id="GO:0042781">
    <property type="term" value="F:3'-tRNA processing endoribonuclease activity"/>
    <property type="evidence" value="ECO:0000318"/>
    <property type="project" value="GO_Central"/>
</dbReference>
<dbReference type="GO" id="GO:0004526">
    <property type="term" value="F:ribonuclease P activity"/>
    <property type="evidence" value="ECO:0000318"/>
    <property type="project" value="GO_Central"/>
</dbReference>
<dbReference type="GO" id="GO:0000049">
    <property type="term" value="F:tRNA binding"/>
    <property type="evidence" value="ECO:0007669"/>
    <property type="project" value="UniProtKB-UniRule"/>
</dbReference>
<dbReference type="GO" id="GO:0042780">
    <property type="term" value="P:tRNA 3'-end processing"/>
    <property type="evidence" value="ECO:0000318"/>
    <property type="project" value="GO_Central"/>
</dbReference>
<dbReference type="GO" id="GO:0001682">
    <property type="term" value="P:tRNA 5'-leader removal"/>
    <property type="evidence" value="ECO:0007669"/>
    <property type="project" value="UniProtKB-UniRule"/>
</dbReference>
<dbReference type="FunFam" id="3.30.230.10:FF:000016">
    <property type="entry name" value="Ribonuclease P protein component"/>
    <property type="match status" value="1"/>
</dbReference>
<dbReference type="Gene3D" id="3.30.230.10">
    <property type="match status" value="1"/>
</dbReference>
<dbReference type="HAMAP" id="MF_00227">
    <property type="entry name" value="RNase_P"/>
    <property type="match status" value="1"/>
</dbReference>
<dbReference type="InterPro" id="IPR020568">
    <property type="entry name" value="Ribosomal_Su5_D2-typ_SF"/>
</dbReference>
<dbReference type="InterPro" id="IPR014721">
    <property type="entry name" value="Ribsml_uS5_D2-typ_fold_subgr"/>
</dbReference>
<dbReference type="InterPro" id="IPR000100">
    <property type="entry name" value="RNase_P"/>
</dbReference>
<dbReference type="NCBIfam" id="TIGR00188">
    <property type="entry name" value="rnpA"/>
    <property type="match status" value="1"/>
</dbReference>
<dbReference type="PANTHER" id="PTHR33992">
    <property type="entry name" value="RIBONUCLEASE P PROTEIN COMPONENT"/>
    <property type="match status" value="1"/>
</dbReference>
<dbReference type="PANTHER" id="PTHR33992:SF1">
    <property type="entry name" value="RIBONUCLEASE P PROTEIN COMPONENT"/>
    <property type="match status" value="1"/>
</dbReference>
<dbReference type="Pfam" id="PF00825">
    <property type="entry name" value="Ribonuclease_P"/>
    <property type="match status" value="1"/>
</dbReference>
<dbReference type="SUPFAM" id="SSF54211">
    <property type="entry name" value="Ribosomal protein S5 domain 2-like"/>
    <property type="match status" value="1"/>
</dbReference>
<evidence type="ECO:0000255" key="1">
    <source>
        <dbReference type="HAMAP-Rule" id="MF_00227"/>
    </source>
</evidence>
<sequence>MSTYAFNRELRLLTPEHYQKVFQQAHSAGSPHLTIIARANNLSHPRLGLAVPKKQIKTAVGRNRFKRICRESFRLHQNQLANKDFVVIAKKSAQDLSNEELFNLLGKLWQRLSRPSRG</sequence>
<feature type="chain" id="PRO_0000198562" description="Ribonuclease P protein component">
    <location>
        <begin position="1"/>
        <end position="118"/>
    </location>
</feature>
<gene>
    <name evidence="1" type="primary">rnpA</name>
    <name type="ordered locus">VC_0006</name>
</gene>
<reference key="1">
    <citation type="journal article" date="2000" name="Nature">
        <title>DNA sequence of both chromosomes of the cholera pathogen Vibrio cholerae.</title>
        <authorList>
            <person name="Heidelberg J.F."/>
            <person name="Eisen J.A."/>
            <person name="Nelson W.C."/>
            <person name="Clayton R.A."/>
            <person name="Gwinn M.L."/>
            <person name="Dodson R.J."/>
            <person name="Haft D.H."/>
            <person name="Hickey E.K."/>
            <person name="Peterson J.D."/>
            <person name="Umayam L.A."/>
            <person name="Gill S.R."/>
            <person name="Nelson K.E."/>
            <person name="Read T.D."/>
            <person name="Tettelin H."/>
            <person name="Richardson D.L."/>
            <person name="Ermolaeva M.D."/>
            <person name="Vamathevan J.J."/>
            <person name="Bass S."/>
            <person name="Qin H."/>
            <person name="Dragoi I."/>
            <person name="Sellers P."/>
            <person name="McDonald L.A."/>
            <person name="Utterback T.R."/>
            <person name="Fleischmann R.D."/>
            <person name="Nierman W.C."/>
            <person name="White O."/>
            <person name="Salzberg S.L."/>
            <person name="Smith H.O."/>
            <person name="Colwell R.R."/>
            <person name="Mekalanos J.J."/>
            <person name="Venter J.C."/>
            <person name="Fraser C.M."/>
        </authorList>
    </citation>
    <scope>NUCLEOTIDE SEQUENCE [LARGE SCALE GENOMIC DNA]</scope>
    <source>
        <strain>ATCC 39315 / El Tor Inaba N16961</strain>
    </source>
</reference>